<organism evidence="10">
    <name type="scientific">Blomia tropicalis</name>
    <name type="common">Mite</name>
    <dbReference type="NCBI Taxonomy" id="40697"/>
    <lineage>
        <taxon>Eukaryota</taxon>
        <taxon>Metazoa</taxon>
        <taxon>Ecdysozoa</taxon>
        <taxon>Arthropoda</taxon>
        <taxon>Chelicerata</taxon>
        <taxon>Arachnida</taxon>
        <taxon>Acari</taxon>
        <taxon>Acariformes</taxon>
        <taxon>Sarcoptiformes</taxon>
        <taxon>Astigmata</taxon>
        <taxon>Glycyphagoidea</taxon>
        <taxon>Echimyopodidae</taxon>
        <taxon>Blomia</taxon>
    </lineage>
</organism>
<name>BLOT3_BLOTA</name>
<comment type="catalytic activity">
    <reaction evidence="1">
        <text>Preferential cleavage: Arg-|-Xaa, Lys-|-Xaa.</text>
        <dbReference type="EC" id="3.4.21.4"/>
    </reaction>
</comment>
<comment type="subcellular location">
    <subcellularLocation>
        <location evidence="6">Secreted</location>
    </subcellularLocation>
</comment>
<comment type="allergen">
    <text evidence="5 6">Causes an allergic reaction in human (PubMed:12708986, PubMed:12752596). Recombinant protein binds to IgE in 51% of the 45 patients tested allergic to B.tropicalis mites (PubMed:12708986). Native protein binds to IgE in 57% of the 44 patients tested allergic to B.tropicalis mites (PubMed:12752596).</text>
</comment>
<comment type="similarity">
    <text evidence="4 9">Belongs to the peptidase S1 family.</text>
</comment>
<keyword id="KW-0020">Allergen</keyword>
<keyword id="KW-1015">Disulfide bond</keyword>
<keyword id="KW-0378">Hydrolase</keyword>
<keyword id="KW-0645">Protease</keyword>
<keyword id="KW-0964">Secreted</keyword>
<keyword id="KW-0720">Serine protease</keyword>
<keyword id="KW-0732">Signal</keyword>
<keyword id="KW-0865">Zymogen</keyword>
<evidence type="ECO:0000250" key="1">
    <source>
        <dbReference type="UniProtKB" id="P35030"/>
    </source>
</evidence>
<evidence type="ECO:0000250" key="2">
    <source>
        <dbReference type="UniProtKB" id="P39675"/>
    </source>
</evidence>
<evidence type="ECO:0000255" key="3"/>
<evidence type="ECO:0000255" key="4">
    <source>
        <dbReference type="PROSITE-ProRule" id="PRU00274"/>
    </source>
</evidence>
<evidence type="ECO:0000269" key="5">
    <source>
    </source>
</evidence>
<evidence type="ECO:0000269" key="6">
    <source>
    </source>
</evidence>
<evidence type="ECO:0000303" key="7">
    <source>
    </source>
</evidence>
<evidence type="ECO:0000303" key="8">
    <source>
    </source>
</evidence>
<evidence type="ECO:0000305" key="9"/>
<evidence type="ECO:0000312" key="10">
    <source>
        <dbReference type="EMBL" id="AAQ24542.1"/>
    </source>
</evidence>
<accession>A1KXI1</accession>
<dbReference type="EC" id="3.4.21.4" evidence="1"/>
<dbReference type="EMBL" id="AY291323">
    <property type="protein sequence ID" value="AAQ24542.1"/>
    <property type="molecule type" value="mRNA"/>
</dbReference>
<dbReference type="SMR" id="A1KXI1"/>
<dbReference type="Allergome" id="687">
    <property type="allergen name" value="Blo t 3"/>
</dbReference>
<dbReference type="MEROPS" id="S01.234"/>
<dbReference type="GO" id="GO:0005576">
    <property type="term" value="C:extracellular region"/>
    <property type="evidence" value="ECO:0000314"/>
    <property type="project" value="UniProtKB"/>
</dbReference>
<dbReference type="GO" id="GO:0004252">
    <property type="term" value="F:serine-type endopeptidase activity"/>
    <property type="evidence" value="ECO:0000250"/>
    <property type="project" value="UniProtKB"/>
</dbReference>
<dbReference type="GO" id="GO:0006508">
    <property type="term" value="P:proteolysis"/>
    <property type="evidence" value="ECO:0000250"/>
    <property type="project" value="UniProtKB"/>
</dbReference>
<dbReference type="CDD" id="cd00190">
    <property type="entry name" value="Tryp_SPc"/>
    <property type="match status" value="1"/>
</dbReference>
<dbReference type="FunFam" id="2.40.10.10:FF:000077">
    <property type="entry name" value="Predicted protein"/>
    <property type="match status" value="1"/>
</dbReference>
<dbReference type="Gene3D" id="2.40.10.10">
    <property type="entry name" value="Trypsin-like serine proteases"/>
    <property type="match status" value="2"/>
</dbReference>
<dbReference type="InterPro" id="IPR050430">
    <property type="entry name" value="Peptidase_S1"/>
</dbReference>
<dbReference type="InterPro" id="IPR009003">
    <property type="entry name" value="Peptidase_S1_PA"/>
</dbReference>
<dbReference type="InterPro" id="IPR043504">
    <property type="entry name" value="Peptidase_S1_PA_chymotrypsin"/>
</dbReference>
<dbReference type="InterPro" id="IPR001314">
    <property type="entry name" value="Peptidase_S1A"/>
</dbReference>
<dbReference type="InterPro" id="IPR001254">
    <property type="entry name" value="Trypsin_dom"/>
</dbReference>
<dbReference type="InterPro" id="IPR018114">
    <property type="entry name" value="TRYPSIN_HIS"/>
</dbReference>
<dbReference type="InterPro" id="IPR033116">
    <property type="entry name" value="TRYPSIN_SER"/>
</dbReference>
<dbReference type="PANTHER" id="PTHR24276:SF98">
    <property type="entry name" value="FI18310P1-RELATED"/>
    <property type="match status" value="1"/>
</dbReference>
<dbReference type="PANTHER" id="PTHR24276">
    <property type="entry name" value="POLYSERASE-RELATED"/>
    <property type="match status" value="1"/>
</dbReference>
<dbReference type="Pfam" id="PF00089">
    <property type="entry name" value="Trypsin"/>
    <property type="match status" value="1"/>
</dbReference>
<dbReference type="PRINTS" id="PR00722">
    <property type="entry name" value="CHYMOTRYPSIN"/>
</dbReference>
<dbReference type="SMART" id="SM00020">
    <property type="entry name" value="Tryp_SPc"/>
    <property type="match status" value="1"/>
</dbReference>
<dbReference type="SUPFAM" id="SSF50494">
    <property type="entry name" value="Trypsin-like serine proteases"/>
    <property type="match status" value="1"/>
</dbReference>
<dbReference type="PROSITE" id="PS50240">
    <property type="entry name" value="TRYPSIN_DOM"/>
    <property type="match status" value="1"/>
</dbReference>
<dbReference type="PROSITE" id="PS00134">
    <property type="entry name" value="TRYPSIN_HIS"/>
    <property type="match status" value="1"/>
</dbReference>
<dbReference type="PROSITE" id="PS00135">
    <property type="entry name" value="TRYPSIN_SER"/>
    <property type="match status" value="1"/>
</dbReference>
<proteinExistence type="evidence at protein level"/>
<reference key="1">
    <citation type="journal article" date="2003" name="Allergy">
        <title>Cloning of a group 3 allergen from Blomia tropicalis mites.</title>
        <authorList>
            <person name="Cheong N."/>
            <person name="Yang L."/>
            <person name="Lee B.W."/>
            <person name="Chua K.Y."/>
        </authorList>
    </citation>
    <scope>NUCLEOTIDE SEQUENCE [MRNA]</scope>
    <scope>ALLERGEN</scope>
</reference>
<reference evidence="10" key="2">
    <citation type="submission" date="2003-05" db="EMBL/GenBank/DDBJ databases">
        <authorList>
            <person name="Chew F.T."/>
            <person name="Wang W.-L."/>
            <person name="Shang H.S."/>
            <person name="Kuay K.T."/>
            <person name="Lim S.H."/>
            <person name="Lee B.W."/>
        </authorList>
    </citation>
    <scope>NUCLEOTIDE SEQUENCE [MRNA]</scope>
</reference>
<reference key="3">
    <citation type="journal article" date="2003" name="Clin. Exp. Allergy">
        <title>Generation of monoclonal antibodies against Blo t 3 using DNA immunization with in vivo electroporation.</title>
        <authorList>
            <person name="Yang L."/>
            <person name="Cheong N."/>
            <person name="Wang D.Y."/>
            <person name="Lee B.W."/>
            <person name="Kuo I.C."/>
            <person name="Huang C.H."/>
            <person name="Chua K.Y."/>
        </authorList>
    </citation>
    <scope>SUBCELLULAR LOCATION</scope>
    <scope>ALLERGEN</scope>
</reference>
<sequence>MKVLVLFCLVSLAAAGPLKDALNKAQVDAFYAEGYIVDGSNAADGDAPYQVSLQRTSHFCGGSIIADNYILTAAHCIQGLSASSLTIRYNTLRHNSGGLTVKASRIIGHEKYDSNTIDNDIALIQTASKMSTGTTNAQAIKLPEQGSDPKASSEVLITGWGTLSSGASSLPTKLQKVTVPIVDRKTCNANYGAVGADITDNMFCAGILNVGGKDACQGDSGGPVAANGVLVGAVSWGYGCAQAKYPGVYTRVGNYISWIKGKGVPV</sequence>
<protein>
    <recommendedName>
        <fullName evidence="9">Trypsin Blo t 3</fullName>
        <ecNumber evidence="1">3.4.21.4</ecNumber>
    </recommendedName>
    <alternativeName>
        <fullName evidence="7">Mite allergen Blo t 3</fullName>
    </alternativeName>
    <allergenName evidence="7 8">Blo t 3</allergenName>
</protein>
<feature type="signal peptide" evidence="3">
    <location>
        <begin position="1"/>
        <end position="15"/>
    </location>
</feature>
<feature type="propeptide" id="PRO_0000447699" evidence="2 3">
    <location>
        <begin position="16"/>
        <end position="35"/>
    </location>
</feature>
<feature type="chain" id="PRO_5012813329" description="Trypsin Blo t 3">
    <location>
        <begin position="36"/>
        <end position="266"/>
    </location>
</feature>
<feature type="domain" description="Peptidase S1" evidence="4">
    <location>
        <begin position="36"/>
        <end position="260"/>
    </location>
</feature>
<feature type="active site" description="Charge relay system" evidence="4">
    <location>
        <position position="75"/>
    </location>
</feature>
<feature type="active site" description="Charge relay system" evidence="4">
    <location>
        <position position="120"/>
    </location>
</feature>
<feature type="active site" description="Charge relay system" evidence="4">
    <location>
        <position position="220"/>
    </location>
</feature>
<feature type="site" description="Required for specificity" evidence="9">
    <location>
        <position position="214"/>
    </location>
</feature>
<feature type="disulfide bond" evidence="4">
    <location>
        <begin position="60"/>
        <end position="76"/>
    </location>
</feature>
<feature type="disulfide bond" evidence="4">
    <location>
        <begin position="187"/>
        <end position="204"/>
    </location>
</feature>
<feature type="disulfide bond" evidence="4">
    <location>
        <begin position="216"/>
        <end position="240"/>
    </location>
</feature>
<feature type="sequence conflict" description="In Ref. 1; no nucleotide entry." evidence="9" ref="1">
    <original>D</original>
    <variation>G</variation>
    <location>
        <position position="38"/>
    </location>
</feature>
<feature type="sequence conflict" description="In Ref. 1; no nucleotide entry." evidence="9" ref="1">
    <original>A</original>
    <variation>T</variation>
    <location>
        <position position="82"/>
    </location>
</feature>
<feature type="sequence conflict" description="In Ref. 1; no nucleotide entry." evidence="9" ref="1">
    <original>S</original>
    <variation>P</variation>
    <location>
        <position position="96"/>
    </location>
</feature>
<feature type="sequence conflict" description="In Ref. 1; no nucleotide entry." evidence="9" ref="1">
    <original>E</original>
    <variation>K</variation>
    <location>
        <position position="154"/>
    </location>
</feature>